<keyword id="KW-0472">Membrane</keyword>
<keyword id="KW-1185">Reference proteome</keyword>
<keyword id="KW-0812">Transmembrane</keyword>
<keyword id="KW-1133">Transmembrane helix</keyword>
<accession>Q28H62</accession>
<dbReference type="EMBL" id="CR761030">
    <property type="protein sequence ID" value="CAJ82148.1"/>
    <property type="molecule type" value="mRNA"/>
</dbReference>
<dbReference type="RefSeq" id="NP_001016439.1">
    <property type="nucleotide sequence ID" value="NM_001016439.2"/>
</dbReference>
<dbReference type="RefSeq" id="XP_012814472.1">
    <property type="nucleotide sequence ID" value="XM_012959018.2"/>
</dbReference>
<dbReference type="RefSeq" id="XP_017947575.1">
    <property type="nucleotide sequence ID" value="XM_018092086.1"/>
</dbReference>
<dbReference type="FunCoup" id="Q28H62">
    <property type="interactions" value="172"/>
</dbReference>
<dbReference type="STRING" id="8364.ENSXETP00000033400"/>
<dbReference type="PaxDb" id="8364-ENSXETP00000054186"/>
<dbReference type="GeneID" id="549193"/>
<dbReference type="KEGG" id="xtr:549193"/>
<dbReference type="AGR" id="Xenbase:XB-GENE-5727646"/>
<dbReference type="CTD" id="84418"/>
<dbReference type="Xenbase" id="XB-GENE-5727646">
    <property type="gene designation" value="cystm1"/>
</dbReference>
<dbReference type="eggNOG" id="ENOG502S4EV">
    <property type="taxonomic scope" value="Eukaryota"/>
</dbReference>
<dbReference type="HOGENOM" id="CLU_155323_0_0_1"/>
<dbReference type="InParanoid" id="Q28H62"/>
<dbReference type="TreeFam" id="TF332352"/>
<dbReference type="Reactome" id="R-XTR-6798695">
    <property type="pathway name" value="Neutrophil degranulation"/>
</dbReference>
<dbReference type="Proteomes" id="UP000008143">
    <property type="component" value="Chromosome 3"/>
</dbReference>
<dbReference type="ExpressionAtlas" id="Q28H62">
    <property type="expression patterns" value="baseline and differential"/>
</dbReference>
<dbReference type="GO" id="GO:0016020">
    <property type="term" value="C:membrane"/>
    <property type="evidence" value="ECO:0007669"/>
    <property type="project" value="UniProtKB-SubCell"/>
</dbReference>
<dbReference type="InterPro" id="IPR043240">
    <property type="entry name" value="CYSTM1-like"/>
</dbReference>
<dbReference type="PANTHER" id="PTHR47564">
    <property type="entry name" value="CYSTEINE-RICH AND TRANSMEMBRANE DOMAIN-CONTAINING PROTEIN 1"/>
    <property type="match status" value="1"/>
</dbReference>
<dbReference type="PANTHER" id="PTHR47564:SF1">
    <property type="entry name" value="CYSTEINE-RICH AND TRANSMEMBRANE DOMAIN-CONTAINING PROTEIN 1"/>
    <property type="match status" value="1"/>
</dbReference>
<reference key="1">
    <citation type="submission" date="2006-10" db="EMBL/GenBank/DDBJ databases">
        <authorList>
            <consortium name="Sanger Xenopus tropicalis EST/cDNA project"/>
        </authorList>
    </citation>
    <scope>NUCLEOTIDE SEQUENCE [LARGE SCALE MRNA]</scope>
    <source>
        <tissue>Egg</tissue>
    </source>
</reference>
<feature type="chain" id="PRO_0000296360" description="Cysteine-rich and transmembrane domain-containing protein 1">
    <location>
        <begin position="1"/>
        <end position="110"/>
    </location>
</feature>
<feature type="transmembrane region" description="Helical" evidence="1">
    <location>
        <begin position="87"/>
        <end position="104"/>
    </location>
</feature>
<feature type="region of interest" description="Disordered" evidence="2">
    <location>
        <begin position="1"/>
        <end position="45"/>
    </location>
</feature>
<feature type="compositionally biased region" description="Pro residues" evidence="2">
    <location>
        <begin position="1"/>
        <end position="18"/>
    </location>
</feature>
<feature type="compositionally biased region" description="Low complexity" evidence="2">
    <location>
        <begin position="19"/>
        <end position="29"/>
    </location>
</feature>
<protein>
    <recommendedName>
        <fullName>Cysteine-rich and transmembrane domain-containing protein 1</fullName>
    </recommendedName>
</protein>
<evidence type="ECO:0000255" key="1"/>
<evidence type="ECO:0000256" key="2">
    <source>
        <dbReference type="SAM" id="MobiDB-lite"/>
    </source>
</evidence>
<evidence type="ECO:0000305" key="3"/>
<gene>
    <name type="primary">cystm1</name>
    <name type="ORF">TEgg056l06.1</name>
</gene>
<name>CYTM1_XENTR</name>
<proteinExistence type="inferred from homology"/>
<sequence>MNYENPPPYASPPAPYPPYGQQQPSYPVPNQYPGNPPGPVGYQPAQPGYQGYPQYGWQGAPPANAPVYMDAPKNTVYVVEERRNDTSGESACLTACWTALCCCCLWDMLT</sequence>
<comment type="subcellular location">
    <subcellularLocation>
        <location evidence="3">Membrane</location>
        <topology evidence="3">Single-pass membrane protein</topology>
    </subcellularLocation>
</comment>
<comment type="similarity">
    <text evidence="3">Belongs to the CYSTM1 family.</text>
</comment>
<organism>
    <name type="scientific">Xenopus tropicalis</name>
    <name type="common">Western clawed frog</name>
    <name type="synonym">Silurana tropicalis</name>
    <dbReference type="NCBI Taxonomy" id="8364"/>
    <lineage>
        <taxon>Eukaryota</taxon>
        <taxon>Metazoa</taxon>
        <taxon>Chordata</taxon>
        <taxon>Craniata</taxon>
        <taxon>Vertebrata</taxon>
        <taxon>Euteleostomi</taxon>
        <taxon>Amphibia</taxon>
        <taxon>Batrachia</taxon>
        <taxon>Anura</taxon>
        <taxon>Pipoidea</taxon>
        <taxon>Pipidae</taxon>
        <taxon>Xenopodinae</taxon>
        <taxon>Xenopus</taxon>
        <taxon>Silurana</taxon>
    </lineage>
</organism>